<accession>Q6HC15</accession>
<dbReference type="EC" id="2.4.1.18" evidence="1"/>
<dbReference type="EMBL" id="AE017355">
    <property type="protein sequence ID" value="AAT59493.1"/>
    <property type="molecule type" value="Genomic_DNA"/>
</dbReference>
<dbReference type="RefSeq" id="WP_000111383.1">
    <property type="nucleotide sequence ID" value="NC_005957.1"/>
</dbReference>
<dbReference type="RefSeq" id="YP_038911.1">
    <property type="nucleotide sequence ID" value="NC_005957.1"/>
</dbReference>
<dbReference type="SMR" id="Q6HC15"/>
<dbReference type="CAZy" id="CBM48">
    <property type="family name" value="Carbohydrate-Binding Module Family 48"/>
</dbReference>
<dbReference type="CAZy" id="GH13">
    <property type="family name" value="Glycoside Hydrolase Family 13"/>
</dbReference>
<dbReference type="KEGG" id="btk:BT9727_4599"/>
<dbReference type="PATRIC" id="fig|281309.8.peg.4898"/>
<dbReference type="HOGENOM" id="CLU_004245_4_0_9"/>
<dbReference type="UniPathway" id="UPA00164"/>
<dbReference type="Proteomes" id="UP000001301">
    <property type="component" value="Chromosome"/>
</dbReference>
<dbReference type="GO" id="GO:0005829">
    <property type="term" value="C:cytosol"/>
    <property type="evidence" value="ECO:0007669"/>
    <property type="project" value="TreeGrafter"/>
</dbReference>
<dbReference type="GO" id="GO:0003844">
    <property type="term" value="F:1,4-alpha-glucan branching enzyme activity"/>
    <property type="evidence" value="ECO:0007669"/>
    <property type="project" value="UniProtKB-UniRule"/>
</dbReference>
<dbReference type="GO" id="GO:0043169">
    <property type="term" value="F:cation binding"/>
    <property type="evidence" value="ECO:0007669"/>
    <property type="project" value="InterPro"/>
</dbReference>
<dbReference type="GO" id="GO:0004553">
    <property type="term" value="F:hydrolase activity, hydrolyzing O-glycosyl compounds"/>
    <property type="evidence" value="ECO:0007669"/>
    <property type="project" value="InterPro"/>
</dbReference>
<dbReference type="GO" id="GO:0005978">
    <property type="term" value="P:glycogen biosynthetic process"/>
    <property type="evidence" value="ECO:0007669"/>
    <property type="project" value="UniProtKB-UniRule"/>
</dbReference>
<dbReference type="CDD" id="cd11322">
    <property type="entry name" value="AmyAc_Glg_BE"/>
    <property type="match status" value="1"/>
</dbReference>
<dbReference type="CDD" id="cd02855">
    <property type="entry name" value="E_set_GBE_prok_N"/>
    <property type="match status" value="1"/>
</dbReference>
<dbReference type="FunFam" id="2.60.40.10:FF:000169">
    <property type="entry name" value="1,4-alpha-glucan branching enzyme GlgB"/>
    <property type="match status" value="1"/>
</dbReference>
<dbReference type="FunFam" id="2.60.40.1180:FF:000002">
    <property type="entry name" value="1,4-alpha-glucan branching enzyme GlgB"/>
    <property type="match status" value="1"/>
</dbReference>
<dbReference type="FunFam" id="3.20.20.80:FF:000003">
    <property type="entry name" value="1,4-alpha-glucan branching enzyme GlgB"/>
    <property type="match status" value="1"/>
</dbReference>
<dbReference type="Gene3D" id="3.20.20.80">
    <property type="entry name" value="Glycosidases"/>
    <property type="match status" value="1"/>
</dbReference>
<dbReference type="Gene3D" id="2.60.40.1180">
    <property type="entry name" value="Golgi alpha-mannosidase II"/>
    <property type="match status" value="1"/>
</dbReference>
<dbReference type="Gene3D" id="2.60.40.10">
    <property type="entry name" value="Immunoglobulins"/>
    <property type="match status" value="1"/>
</dbReference>
<dbReference type="HAMAP" id="MF_00685">
    <property type="entry name" value="GlgB"/>
    <property type="match status" value="1"/>
</dbReference>
<dbReference type="InterPro" id="IPR006048">
    <property type="entry name" value="A-amylase/branching_C"/>
</dbReference>
<dbReference type="InterPro" id="IPR037439">
    <property type="entry name" value="Branching_enzy"/>
</dbReference>
<dbReference type="InterPro" id="IPR006407">
    <property type="entry name" value="GlgB"/>
</dbReference>
<dbReference type="InterPro" id="IPR044143">
    <property type="entry name" value="GlgB_N_E_set_prok"/>
</dbReference>
<dbReference type="InterPro" id="IPR006047">
    <property type="entry name" value="Glyco_hydro_13_cat_dom"/>
</dbReference>
<dbReference type="InterPro" id="IPR004193">
    <property type="entry name" value="Glyco_hydro_13_N"/>
</dbReference>
<dbReference type="InterPro" id="IPR013780">
    <property type="entry name" value="Glyco_hydro_b"/>
</dbReference>
<dbReference type="InterPro" id="IPR017853">
    <property type="entry name" value="Glycoside_hydrolase_SF"/>
</dbReference>
<dbReference type="InterPro" id="IPR013783">
    <property type="entry name" value="Ig-like_fold"/>
</dbReference>
<dbReference type="NCBIfam" id="TIGR01515">
    <property type="entry name" value="branching_enzym"/>
    <property type="match status" value="1"/>
</dbReference>
<dbReference type="NCBIfam" id="NF003811">
    <property type="entry name" value="PRK05402.1"/>
    <property type="match status" value="1"/>
</dbReference>
<dbReference type="NCBIfam" id="NF008967">
    <property type="entry name" value="PRK12313.1"/>
    <property type="match status" value="1"/>
</dbReference>
<dbReference type="PANTHER" id="PTHR43651">
    <property type="entry name" value="1,4-ALPHA-GLUCAN-BRANCHING ENZYME"/>
    <property type="match status" value="1"/>
</dbReference>
<dbReference type="PANTHER" id="PTHR43651:SF3">
    <property type="entry name" value="1,4-ALPHA-GLUCAN-BRANCHING ENZYME"/>
    <property type="match status" value="1"/>
</dbReference>
<dbReference type="Pfam" id="PF00128">
    <property type="entry name" value="Alpha-amylase"/>
    <property type="match status" value="2"/>
</dbReference>
<dbReference type="Pfam" id="PF02806">
    <property type="entry name" value="Alpha-amylase_C"/>
    <property type="match status" value="1"/>
</dbReference>
<dbReference type="Pfam" id="PF02922">
    <property type="entry name" value="CBM_48"/>
    <property type="match status" value="1"/>
</dbReference>
<dbReference type="PIRSF" id="PIRSF000463">
    <property type="entry name" value="GlgB"/>
    <property type="match status" value="1"/>
</dbReference>
<dbReference type="SMART" id="SM00642">
    <property type="entry name" value="Aamy"/>
    <property type="match status" value="1"/>
</dbReference>
<dbReference type="SUPFAM" id="SSF51445">
    <property type="entry name" value="(Trans)glycosidases"/>
    <property type="match status" value="1"/>
</dbReference>
<dbReference type="SUPFAM" id="SSF51011">
    <property type="entry name" value="Glycosyl hydrolase domain"/>
    <property type="match status" value="1"/>
</dbReference>
<organism>
    <name type="scientific">Bacillus thuringiensis subsp. konkukian (strain 97-27)</name>
    <dbReference type="NCBI Taxonomy" id="281309"/>
    <lineage>
        <taxon>Bacteria</taxon>
        <taxon>Bacillati</taxon>
        <taxon>Bacillota</taxon>
        <taxon>Bacilli</taxon>
        <taxon>Bacillales</taxon>
        <taxon>Bacillaceae</taxon>
        <taxon>Bacillus</taxon>
        <taxon>Bacillus cereus group</taxon>
    </lineage>
</organism>
<name>GLGB_BACHK</name>
<keyword id="KW-0119">Carbohydrate metabolism</keyword>
<keyword id="KW-0320">Glycogen biosynthesis</keyword>
<keyword id="KW-0321">Glycogen metabolism</keyword>
<keyword id="KW-0328">Glycosyltransferase</keyword>
<keyword id="KW-0808">Transferase</keyword>
<comment type="function">
    <text evidence="1">Catalyzes the formation of the alpha-1,6-glucosidic linkages in glycogen by scission of a 1,4-alpha-linked oligosaccharide from growing alpha-1,4-glucan chains and the subsequent attachment of the oligosaccharide to the alpha-1,6 position.</text>
</comment>
<comment type="catalytic activity">
    <reaction evidence="1">
        <text>Transfers a segment of a (1-&gt;4)-alpha-D-glucan chain to a primary hydroxy group in a similar glucan chain.</text>
        <dbReference type="EC" id="2.4.1.18"/>
    </reaction>
</comment>
<comment type="pathway">
    <text evidence="1">Glycan biosynthesis; glycogen biosynthesis.</text>
</comment>
<comment type="subunit">
    <text evidence="1">Monomer.</text>
</comment>
<comment type="similarity">
    <text evidence="1">Belongs to the glycosyl hydrolase 13 family. GlgB subfamily.</text>
</comment>
<evidence type="ECO:0000255" key="1">
    <source>
        <dbReference type="HAMAP-Rule" id="MF_00685"/>
    </source>
</evidence>
<evidence type="ECO:0000256" key="2">
    <source>
        <dbReference type="SAM" id="MobiDB-lite"/>
    </source>
</evidence>
<sequence>MSVINCEEVKRDEFHTEKYYESYNIFGAHIVTEDEMRGVRFTVWAPHAKAMSVVGDFNEWDYEQHKMLQVTEEGIWSLFIPHIEEREIYKYAIETMAGDVIFKADPYAVYAEVRPNTASVVFDIKGYEWNDKNWSRKKKKKSVYKEAMTVYELHFGSWKKKEDGTLYSYREMAEELIPYVVEHQFTHIEIMPLVEHPYDRSWGYQGTGYYAATSRFGTPYDLMHFVDECHKYGIGVILDWVPGHFCKDAHGLYLFDGTPTYEYKDKDVQENPVWGTVNFDLGKREVRNFLISNALFWMRYFHIDGFRVDAVANMLYWNKEGQEQSNEHAVSFLRELNEAVFAEDEDFLMTAEDSTAWPLVTAPTYEGGLGFNYKWNMGWMNDVLKYMECAPEYRKYIHDKMTFSLLYAYSENFILPLSHDEVVHGKKSLLNKMPGDYWDKFAQLRLLYGYFFTHPGKKLLFMGGEFGQFDEWKDLEDLDWNLHDFEMHRYMHDYFKELIALYKRSKPLWQLDHSREGFQWIDANNNEQSIFSFIRQGDKQEDALVVVCNFTKATYENYKVGVPDFEYYNEILNSDAEQYGGSGQVNKKRLKTIQEPYHNQTAHVEITIPPFGVSILRPVKTRKGSKKQDGSKTKVRSNVTSRGKR</sequence>
<proteinExistence type="inferred from homology"/>
<protein>
    <recommendedName>
        <fullName evidence="1">1,4-alpha-glucan branching enzyme GlgB</fullName>
        <ecNumber evidence="1">2.4.1.18</ecNumber>
    </recommendedName>
    <alternativeName>
        <fullName evidence="1">1,4-alpha-D-glucan:1,4-alpha-D-glucan 6-glucosyl-transferase</fullName>
    </alternativeName>
    <alternativeName>
        <fullName evidence="1">Alpha-(1-&gt;4)-glucan branching enzyme</fullName>
    </alternativeName>
    <alternativeName>
        <fullName evidence="1">Glycogen branching enzyme</fullName>
        <shortName evidence="1">BE</shortName>
    </alternativeName>
</protein>
<gene>
    <name evidence="1" type="primary">glgB</name>
    <name type="ordered locus">BT9727_4599</name>
</gene>
<feature type="chain" id="PRO_0000188680" description="1,4-alpha-glucan branching enzyme GlgB">
    <location>
        <begin position="1"/>
        <end position="645"/>
    </location>
</feature>
<feature type="region of interest" description="Disordered" evidence="2">
    <location>
        <begin position="619"/>
        <end position="645"/>
    </location>
</feature>
<feature type="compositionally biased region" description="Polar residues" evidence="2">
    <location>
        <begin position="636"/>
        <end position="645"/>
    </location>
</feature>
<feature type="active site" description="Nucleophile" evidence="1">
    <location>
        <position position="309"/>
    </location>
</feature>
<feature type="active site" description="Proton donor" evidence="1">
    <location>
        <position position="352"/>
    </location>
</feature>
<reference key="1">
    <citation type="journal article" date="2006" name="J. Bacteriol.">
        <title>Pathogenomic sequence analysis of Bacillus cereus and Bacillus thuringiensis isolates closely related to Bacillus anthracis.</title>
        <authorList>
            <person name="Han C.S."/>
            <person name="Xie G."/>
            <person name="Challacombe J.F."/>
            <person name="Altherr M.R."/>
            <person name="Bhotika S.S."/>
            <person name="Bruce D."/>
            <person name="Campbell C.S."/>
            <person name="Campbell M.L."/>
            <person name="Chen J."/>
            <person name="Chertkov O."/>
            <person name="Cleland C."/>
            <person name="Dimitrijevic M."/>
            <person name="Doggett N.A."/>
            <person name="Fawcett J.J."/>
            <person name="Glavina T."/>
            <person name="Goodwin L.A."/>
            <person name="Hill K.K."/>
            <person name="Hitchcock P."/>
            <person name="Jackson P.J."/>
            <person name="Keim P."/>
            <person name="Kewalramani A.R."/>
            <person name="Longmire J."/>
            <person name="Lucas S."/>
            <person name="Malfatti S."/>
            <person name="McMurry K."/>
            <person name="Meincke L.J."/>
            <person name="Misra M."/>
            <person name="Moseman B.L."/>
            <person name="Mundt M."/>
            <person name="Munk A.C."/>
            <person name="Okinaka R.T."/>
            <person name="Parson-Quintana B."/>
            <person name="Reilly L.P."/>
            <person name="Richardson P."/>
            <person name="Robinson D.L."/>
            <person name="Rubin E."/>
            <person name="Saunders E."/>
            <person name="Tapia R."/>
            <person name="Tesmer J.G."/>
            <person name="Thayer N."/>
            <person name="Thompson L.S."/>
            <person name="Tice H."/>
            <person name="Ticknor L.O."/>
            <person name="Wills P.L."/>
            <person name="Brettin T.S."/>
            <person name="Gilna P."/>
        </authorList>
    </citation>
    <scope>NUCLEOTIDE SEQUENCE [LARGE SCALE GENOMIC DNA]</scope>
    <source>
        <strain>97-27</strain>
    </source>
</reference>